<organism>
    <name type="scientific">Rattus norvegicus</name>
    <name type="common">Rat</name>
    <dbReference type="NCBI Taxonomy" id="10116"/>
    <lineage>
        <taxon>Eukaryota</taxon>
        <taxon>Metazoa</taxon>
        <taxon>Chordata</taxon>
        <taxon>Craniata</taxon>
        <taxon>Vertebrata</taxon>
        <taxon>Euteleostomi</taxon>
        <taxon>Mammalia</taxon>
        <taxon>Eutheria</taxon>
        <taxon>Euarchontoglires</taxon>
        <taxon>Glires</taxon>
        <taxon>Rodentia</taxon>
        <taxon>Myomorpha</taxon>
        <taxon>Muroidea</taxon>
        <taxon>Muridae</taxon>
        <taxon>Murinae</taxon>
        <taxon>Rattus</taxon>
    </lineage>
</organism>
<protein>
    <recommendedName>
        <fullName>Protein PAT1 homolog 1</fullName>
    </recommendedName>
    <alternativeName>
        <fullName>PAT1-like protein 1</fullName>
    </alternativeName>
    <alternativeName>
        <fullName>Protein PAT1 homolog b</fullName>
        <shortName>Pat1b</shortName>
    </alternativeName>
</protein>
<reference key="1">
    <citation type="submission" date="2005-07" db="EMBL/GenBank/DDBJ databases">
        <authorList>
            <person name="Mural R.J."/>
            <person name="Adams M.D."/>
            <person name="Myers E.W."/>
            <person name="Smith H.O."/>
            <person name="Venter J.C."/>
        </authorList>
    </citation>
    <scope>NUCLEOTIDE SEQUENCE [LARGE SCALE GENOMIC DNA]</scope>
    <source>
        <strain>Brown Norway</strain>
    </source>
</reference>
<reference key="2">
    <citation type="journal article" date="2004" name="Genome Res.">
        <title>The status, quality, and expansion of the NIH full-length cDNA project: the Mammalian Gene Collection (MGC).</title>
        <authorList>
            <consortium name="The MGC Project Team"/>
        </authorList>
    </citation>
    <scope>NUCLEOTIDE SEQUENCE [LARGE SCALE MRNA]</scope>
    <source>
        <tissue>Kidney</tissue>
    </source>
</reference>
<gene>
    <name type="primary">Patl1</name>
</gene>
<proteinExistence type="evidence at transcript level"/>
<comment type="function">
    <text evidence="3">RNA-binding protein involved in deadenylation-dependent decapping of mRNAs, leading to the degradation of mRNAs. Acts as a scaffold protein that connects deadenylation and decapping machinery. Required for cytoplasmic mRNA processing body (P-body) assembly.</text>
</comment>
<comment type="subunit">
    <text evidence="3">Interacts (via region A) with DDX6/RCK. Interacts (via region H and region C) with LSM1 and LSM4. Interacts (via region N) with DCP1A, DCP2, EDC3, EDC4 and XRN1. Interacts with the CCR4-NOT complex. Interacts with the Lsm-containing SMN-Sm protein complex. Interacts with EIF4ENIF1/4E-T.</text>
</comment>
<comment type="subcellular location">
    <subcellularLocation>
        <location evidence="3">Cytoplasm</location>
        <location evidence="3">P-body</location>
    </subcellularLocation>
    <subcellularLocation>
        <location evidence="3">Nucleus</location>
    </subcellularLocation>
    <subcellularLocation>
        <location evidence="3">Nucleus</location>
        <location evidence="3">PML body</location>
    </subcellularLocation>
    <subcellularLocation>
        <location evidence="3">Nucleus speckle</location>
    </subcellularLocation>
    <text evidence="3">Predominantly cytoplasmic. Shuttles between the nucleus and the cytoplasm in a CRM1-dependent manner. Enriched in splicing speckles. Localization to nuclear foci and speckles requires active transcription. Excluded from the nucleolus.</text>
</comment>
<comment type="domain">
    <text evidence="1">The region C, also named Pat-C, is required for RNA-binding and mediates the binding with the Lsm-containing SMN-Sm protein complex and the decapping machinery. It folds into an alpha-alpha superhelix, exposing conserved and basic residues on one side of the domain.</text>
</comment>
<comment type="similarity">
    <text evidence="5">Belongs to the PAT1 family.</text>
</comment>
<name>PATL1_RAT</name>
<keyword id="KW-0963">Cytoplasm</keyword>
<keyword id="KW-0488">Methylation</keyword>
<keyword id="KW-0539">Nucleus</keyword>
<keyword id="KW-0597">Phosphoprotein</keyword>
<keyword id="KW-1185">Reference proteome</keyword>
<keyword id="KW-0694">RNA-binding</keyword>
<dbReference type="EMBL" id="CH473953">
    <property type="protein sequence ID" value="EDM12901.1"/>
    <property type="molecule type" value="Genomic_DNA"/>
</dbReference>
<dbReference type="EMBL" id="BC168974">
    <property type="protein sequence ID" value="AAI68974.1"/>
    <property type="molecule type" value="mRNA"/>
</dbReference>
<dbReference type="RefSeq" id="NP_001101990.1">
    <property type="nucleotide sequence ID" value="NM_001108520.2"/>
</dbReference>
<dbReference type="SMR" id="B5DF93"/>
<dbReference type="FunCoup" id="B5DF93">
    <property type="interactions" value="3354"/>
</dbReference>
<dbReference type="STRING" id="10116.ENSRNOP00000059542"/>
<dbReference type="GlyGen" id="B5DF93">
    <property type="glycosylation" value="1 site"/>
</dbReference>
<dbReference type="iPTMnet" id="B5DF93"/>
<dbReference type="PhosphoSitePlus" id="B5DF93"/>
<dbReference type="jPOST" id="B5DF93"/>
<dbReference type="PaxDb" id="10116-ENSRNOP00000059542"/>
<dbReference type="PeptideAtlas" id="B5DF93"/>
<dbReference type="Ensembl" id="ENSRNOT00000066247.4">
    <property type="protein sequence ID" value="ENSRNOP00000059542.2"/>
    <property type="gene ID" value="ENSRNOG00000021052.8"/>
</dbReference>
<dbReference type="GeneID" id="361736"/>
<dbReference type="KEGG" id="rno:361736"/>
<dbReference type="UCSC" id="RGD:1305514">
    <property type="organism name" value="rat"/>
</dbReference>
<dbReference type="AGR" id="RGD:1305514"/>
<dbReference type="CTD" id="219988"/>
<dbReference type="RGD" id="1305514">
    <property type="gene designation" value="Patl1"/>
</dbReference>
<dbReference type="eggNOG" id="KOG4592">
    <property type="taxonomic scope" value="Eukaryota"/>
</dbReference>
<dbReference type="GeneTree" id="ENSGT00520000055649"/>
<dbReference type="HOGENOM" id="CLU_009778_1_0_1"/>
<dbReference type="InParanoid" id="B5DF93"/>
<dbReference type="OMA" id="QAPMFRA"/>
<dbReference type="OrthoDB" id="74835at2759"/>
<dbReference type="PhylomeDB" id="B5DF93"/>
<dbReference type="Reactome" id="R-RNO-430039">
    <property type="pathway name" value="mRNA decay by 5' to 3' exoribonuclease"/>
</dbReference>
<dbReference type="PRO" id="PR:B5DF93"/>
<dbReference type="Proteomes" id="UP000002494">
    <property type="component" value="Chromosome 1"/>
</dbReference>
<dbReference type="Proteomes" id="UP000234681">
    <property type="component" value="Chromosome 1"/>
</dbReference>
<dbReference type="Bgee" id="ENSRNOG00000021052">
    <property type="expression patterns" value="Expressed in skeletal muscle tissue and 19 other cell types or tissues"/>
</dbReference>
<dbReference type="GO" id="GO:0030014">
    <property type="term" value="C:CCR4-NOT complex"/>
    <property type="evidence" value="ECO:0000266"/>
    <property type="project" value="RGD"/>
</dbReference>
<dbReference type="GO" id="GO:0005829">
    <property type="term" value="C:cytosol"/>
    <property type="evidence" value="ECO:0007669"/>
    <property type="project" value="Ensembl"/>
</dbReference>
<dbReference type="GO" id="GO:0016607">
    <property type="term" value="C:nuclear speck"/>
    <property type="evidence" value="ECO:0007669"/>
    <property type="project" value="UniProtKB-SubCell"/>
</dbReference>
<dbReference type="GO" id="GO:0000932">
    <property type="term" value="C:P-body"/>
    <property type="evidence" value="ECO:0000250"/>
    <property type="project" value="UniProtKB"/>
</dbReference>
<dbReference type="GO" id="GO:0016605">
    <property type="term" value="C:PML body"/>
    <property type="evidence" value="ECO:0007669"/>
    <property type="project" value="UniProtKB-SubCell"/>
</dbReference>
<dbReference type="GO" id="GO:0034046">
    <property type="term" value="F:poly(G) binding"/>
    <property type="evidence" value="ECO:0000266"/>
    <property type="project" value="RGD"/>
</dbReference>
<dbReference type="GO" id="GO:0008266">
    <property type="term" value="F:poly(U) RNA binding"/>
    <property type="evidence" value="ECO:0000266"/>
    <property type="project" value="RGD"/>
</dbReference>
<dbReference type="GO" id="GO:0003723">
    <property type="term" value="F:RNA binding"/>
    <property type="evidence" value="ECO:0000250"/>
    <property type="project" value="UniProtKB"/>
</dbReference>
<dbReference type="GO" id="GO:0000290">
    <property type="term" value="P:deadenylation-dependent decapping of nuclear-transcribed mRNA"/>
    <property type="evidence" value="ECO:0000250"/>
    <property type="project" value="UniProtKB"/>
</dbReference>
<dbReference type="GO" id="GO:0033962">
    <property type="term" value="P:P-body assembly"/>
    <property type="evidence" value="ECO:0000250"/>
    <property type="project" value="UniProtKB"/>
</dbReference>
<dbReference type="InterPro" id="IPR039900">
    <property type="entry name" value="Pat1-like"/>
</dbReference>
<dbReference type="InterPro" id="IPR019167">
    <property type="entry name" value="PAT1_dom"/>
</dbReference>
<dbReference type="PANTHER" id="PTHR21551:SF2">
    <property type="entry name" value="PROTEIN PAT1 HOMOLOG 1"/>
    <property type="match status" value="1"/>
</dbReference>
<dbReference type="PANTHER" id="PTHR21551">
    <property type="entry name" value="TOPOISOMERASE II-ASSOCIATED PROTEIN PAT1"/>
    <property type="match status" value="1"/>
</dbReference>
<dbReference type="Pfam" id="PF09770">
    <property type="entry name" value="PAT1"/>
    <property type="match status" value="1"/>
</dbReference>
<feature type="chain" id="PRO_0000404575" description="Protein PAT1 homolog 1">
    <location>
        <begin position="1"/>
        <end position="770"/>
    </location>
</feature>
<feature type="region of interest" description="Involved in nuclear foci localization" evidence="1">
    <location>
        <begin position="1"/>
        <end position="397"/>
    </location>
</feature>
<feature type="region of interest" description="Region A; interaction with DDX6/RCK" evidence="1">
    <location>
        <begin position="1"/>
        <end position="84"/>
    </location>
</feature>
<feature type="region of interest" description="Disordered" evidence="4">
    <location>
        <begin position="1"/>
        <end position="42"/>
    </location>
</feature>
<feature type="region of interest" description="Region N; interaction with decapping machinery" evidence="1">
    <location>
        <begin position="85"/>
        <end position="388"/>
    </location>
</feature>
<feature type="region of interest" description="Involved in RNA-binding" evidence="1">
    <location>
        <begin position="223"/>
        <end position="397"/>
    </location>
</feature>
<feature type="region of interest" description="Disordered" evidence="4">
    <location>
        <begin position="320"/>
        <end position="341"/>
    </location>
</feature>
<feature type="region of interest" description="Disordered" evidence="4">
    <location>
        <begin position="369"/>
        <end position="394"/>
    </location>
</feature>
<feature type="region of interest" description="Region H" evidence="1">
    <location>
        <begin position="389"/>
        <end position="448"/>
    </location>
</feature>
<feature type="region of interest" description="Involved in nuclear speckle localization" evidence="1">
    <location>
        <begin position="398"/>
        <end position="770"/>
    </location>
</feature>
<feature type="region of interest" description="Region C" evidence="1">
    <location>
        <begin position="449"/>
        <end position="770"/>
    </location>
</feature>
<feature type="short sequence motif" description="Nuclear export signal" evidence="1">
    <location>
        <begin position="86"/>
        <end position="95"/>
    </location>
</feature>
<feature type="compositionally biased region" description="Acidic residues" evidence="4">
    <location>
        <begin position="7"/>
        <end position="33"/>
    </location>
</feature>
<feature type="compositionally biased region" description="Pro residues" evidence="4">
    <location>
        <begin position="321"/>
        <end position="337"/>
    </location>
</feature>
<feature type="compositionally biased region" description="Low complexity" evidence="4">
    <location>
        <begin position="369"/>
        <end position="380"/>
    </location>
</feature>
<feature type="compositionally biased region" description="Basic and acidic residues" evidence="4">
    <location>
        <begin position="385"/>
        <end position="394"/>
    </location>
</feature>
<feature type="modified residue" description="Phosphoserine" evidence="3">
    <location>
        <position position="177"/>
    </location>
</feature>
<feature type="modified residue" description="Phosphothreonine" evidence="2">
    <location>
        <position position="178"/>
    </location>
</feature>
<feature type="modified residue" description="Phosphoserine" evidence="3">
    <location>
        <position position="179"/>
    </location>
</feature>
<feature type="modified residue" description="Phosphoserine" evidence="3">
    <location>
        <position position="184"/>
    </location>
</feature>
<feature type="modified residue" description="Phosphothreonine" evidence="3">
    <location>
        <position position="194"/>
    </location>
</feature>
<feature type="modified residue" description="Asymmetric dimethylarginine" evidence="3">
    <location>
        <position position="217"/>
    </location>
</feature>
<feature type="modified residue" description="Asymmetric dimethylarginine" evidence="3">
    <location>
        <position position="223"/>
    </location>
</feature>
<feature type="modified residue" description="Asymmetric dimethylarginine" evidence="3">
    <location>
        <position position="263"/>
    </location>
</feature>
<feature type="modified residue" description="Phosphoserine" evidence="3">
    <location>
        <position position="278"/>
    </location>
</feature>
<feature type="modified residue" description="Asymmetric dimethylarginine" evidence="2">
    <location>
        <position position="284"/>
    </location>
</feature>
<feature type="modified residue" description="Omega-N-methylarginine" evidence="2">
    <location>
        <position position="385"/>
    </location>
</feature>
<sequence length="770" mass="86869">MFRYESLEDCPLDEDEDAFQGLGEEDEEIDQFNDDTFGSGAVDDDWQEAHERLAELEEKLPVAADEQTGNGERDEMDLLGDHEENLAERLSKMVIENELEDPAVMRAVQTRPVLQPQPGSLNSSIWDGSEVLRRIRGPLLAQEMPTVSVLEYALPQRPPQGPEDDRDLSERALPRRSTSPIIGSPPVRAVPIGTPPKQMAVPSFNQQILCPKPVHVRPPMPPRYPAPYGERMSPNQLCSVPNSSLLGHPFPPSVPPVLSPLQRAQLLGGAQLQPGRMSPSQFARVPGFVGSPLAAMNPKLLQGRVGQMLPPAPGFRAFFSAPPPATPPPQQHPPGPGPHLQNLRPQAPMFRPDTTHLHPQHRRLLHQRQLQSRNQHRNLNGTGDRGGHRVSHQDHLRKDPYANLMLQREKDWVSKIQMMQLQSTDPYLDDFYYQNYFEKLEKSSAAEEMQGDGPKKERTKLITPQVARLEHAYKPVQFEGSLGKLTVSSVNNPRKMIDAVVTSRSEDDETKEKQVRDKRRKTLVIIEKTYSLLLDVEDYERRYLLSLEEERPALTDERKHKIWSMYDNLRGKLPGQERPSDDHFVQIMCIRKGKRMVARILPFLSTEQAADILMATARNLPFLIKKDAQDEVLPCLLSPFSLLLYHLPSVTVTSLLQQLMNLPQSATAPAPSNSHLTAVLQNKFGLSLLLILLSRGEDLHSSDPTVESTQNNQWTEVMFMATQELLRIPQAALAKPISIPTNLVSLFSRYVDRQKLNLLETKLQLVQGMR</sequence>
<accession>B5DF93</accession>
<evidence type="ECO:0000250" key="1"/>
<evidence type="ECO:0000250" key="2">
    <source>
        <dbReference type="UniProtKB" id="Q3TC46"/>
    </source>
</evidence>
<evidence type="ECO:0000250" key="3">
    <source>
        <dbReference type="UniProtKB" id="Q86TB9"/>
    </source>
</evidence>
<evidence type="ECO:0000256" key="4">
    <source>
        <dbReference type="SAM" id="MobiDB-lite"/>
    </source>
</evidence>
<evidence type="ECO:0000305" key="5"/>